<sequence length="132" mass="14632">MSVSDPLGDMLTRIRNAVGRKKTKVSTPASKLRARVLDVLQAEGYIRGYTQSEFENGKAEIEIELKYYEGVPVIREITRVSKPGRRVYVSVKSIPQVVNGLGISILSTPKGVMADHEAREQNVGGELLCRIF</sequence>
<name>RS8_BRUME</name>
<evidence type="ECO:0000255" key="1">
    <source>
        <dbReference type="HAMAP-Rule" id="MF_01302"/>
    </source>
</evidence>
<evidence type="ECO:0000305" key="2"/>
<gene>
    <name evidence="1" type="primary">rpsH</name>
    <name type="ordered locus">BMEI0771</name>
</gene>
<proteinExistence type="inferred from homology"/>
<comment type="function">
    <text evidence="1">One of the primary rRNA binding proteins, it binds directly to 16S rRNA central domain where it helps coordinate assembly of the platform of the 30S subunit.</text>
</comment>
<comment type="subunit">
    <text evidence="1">Part of the 30S ribosomal subunit. Contacts proteins S5 and S12.</text>
</comment>
<comment type="similarity">
    <text evidence="1">Belongs to the universal ribosomal protein uS8 family.</text>
</comment>
<reference key="1">
    <citation type="journal article" date="2002" name="Proc. Natl. Acad. Sci. U.S.A.">
        <title>The genome sequence of the facultative intracellular pathogen Brucella melitensis.</title>
        <authorList>
            <person name="DelVecchio V.G."/>
            <person name="Kapatral V."/>
            <person name="Redkar R.J."/>
            <person name="Patra G."/>
            <person name="Mujer C."/>
            <person name="Los T."/>
            <person name="Ivanova N."/>
            <person name="Anderson I."/>
            <person name="Bhattacharyya A."/>
            <person name="Lykidis A."/>
            <person name="Reznik G."/>
            <person name="Jablonski L."/>
            <person name="Larsen N."/>
            <person name="D'Souza M."/>
            <person name="Bernal A."/>
            <person name="Mazur M."/>
            <person name="Goltsman E."/>
            <person name="Selkov E."/>
            <person name="Elzer P.H."/>
            <person name="Hagius S."/>
            <person name="O'Callaghan D."/>
            <person name="Letesson J.-J."/>
            <person name="Haselkorn R."/>
            <person name="Kyrpides N.C."/>
            <person name="Overbeek R."/>
        </authorList>
    </citation>
    <scope>NUCLEOTIDE SEQUENCE [LARGE SCALE GENOMIC DNA]</scope>
    <source>
        <strain>ATCC 23456 / CCUG 17765 / NCTC 10094 / 16M</strain>
    </source>
</reference>
<dbReference type="EMBL" id="AE008917">
    <property type="protein sequence ID" value="AAL51952.1"/>
    <property type="molecule type" value="Genomic_DNA"/>
</dbReference>
<dbReference type="PIR" id="AE3348">
    <property type="entry name" value="AE3348"/>
</dbReference>
<dbReference type="RefSeq" id="WP_004686960.1">
    <property type="nucleotide sequence ID" value="NC_003317.1"/>
</dbReference>
<dbReference type="SMR" id="Q8YHM6"/>
<dbReference type="GeneID" id="29593583"/>
<dbReference type="KEGG" id="bme:BMEI0771"/>
<dbReference type="KEGG" id="bmel:DK63_651"/>
<dbReference type="PATRIC" id="fig|224914.52.peg.682"/>
<dbReference type="eggNOG" id="COG0096">
    <property type="taxonomic scope" value="Bacteria"/>
</dbReference>
<dbReference type="Proteomes" id="UP000000419">
    <property type="component" value="Chromosome I"/>
</dbReference>
<dbReference type="GO" id="GO:1990904">
    <property type="term" value="C:ribonucleoprotein complex"/>
    <property type="evidence" value="ECO:0007669"/>
    <property type="project" value="UniProtKB-KW"/>
</dbReference>
<dbReference type="GO" id="GO:0005840">
    <property type="term" value="C:ribosome"/>
    <property type="evidence" value="ECO:0007669"/>
    <property type="project" value="UniProtKB-KW"/>
</dbReference>
<dbReference type="GO" id="GO:0019843">
    <property type="term" value="F:rRNA binding"/>
    <property type="evidence" value="ECO:0007669"/>
    <property type="project" value="UniProtKB-UniRule"/>
</dbReference>
<dbReference type="GO" id="GO:0003735">
    <property type="term" value="F:structural constituent of ribosome"/>
    <property type="evidence" value="ECO:0007669"/>
    <property type="project" value="InterPro"/>
</dbReference>
<dbReference type="GO" id="GO:0006412">
    <property type="term" value="P:translation"/>
    <property type="evidence" value="ECO:0007669"/>
    <property type="project" value="UniProtKB-UniRule"/>
</dbReference>
<dbReference type="FunFam" id="3.30.1370.30:FF:000002">
    <property type="entry name" value="30S ribosomal protein S8"/>
    <property type="match status" value="1"/>
</dbReference>
<dbReference type="FunFam" id="3.30.1490.10:FF:000001">
    <property type="entry name" value="30S ribosomal protein S8"/>
    <property type="match status" value="1"/>
</dbReference>
<dbReference type="Gene3D" id="3.30.1370.30">
    <property type="match status" value="1"/>
</dbReference>
<dbReference type="Gene3D" id="3.30.1490.10">
    <property type="match status" value="1"/>
</dbReference>
<dbReference type="HAMAP" id="MF_01302_B">
    <property type="entry name" value="Ribosomal_uS8_B"/>
    <property type="match status" value="1"/>
</dbReference>
<dbReference type="InterPro" id="IPR000630">
    <property type="entry name" value="Ribosomal_uS8"/>
</dbReference>
<dbReference type="InterPro" id="IPR047863">
    <property type="entry name" value="Ribosomal_uS8_CS"/>
</dbReference>
<dbReference type="InterPro" id="IPR035987">
    <property type="entry name" value="Ribosomal_uS8_sf"/>
</dbReference>
<dbReference type="NCBIfam" id="NF001109">
    <property type="entry name" value="PRK00136.1"/>
    <property type="match status" value="1"/>
</dbReference>
<dbReference type="PANTHER" id="PTHR11758">
    <property type="entry name" value="40S RIBOSOMAL PROTEIN S15A"/>
    <property type="match status" value="1"/>
</dbReference>
<dbReference type="Pfam" id="PF00410">
    <property type="entry name" value="Ribosomal_S8"/>
    <property type="match status" value="1"/>
</dbReference>
<dbReference type="SUPFAM" id="SSF56047">
    <property type="entry name" value="Ribosomal protein S8"/>
    <property type="match status" value="1"/>
</dbReference>
<dbReference type="PROSITE" id="PS00053">
    <property type="entry name" value="RIBOSOMAL_S8"/>
    <property type="match status" value="1"/>
</dbReference>
<protein>
    <recommendedName>
        <fullName evidence="1">Small ribosomal subunit protein uS8</fullName>
    </recommendedName>
    <alternativeName>
        <fullName evidence="2">30S ribosomal protein S8</fullName>
    </alternativeName>
</protein>
<keyword id="KW-0687">Ribonucleoprotein</keyword>
<keyword id="KW-0689">Ribosomal protein</keyword>
<keyword id="KW-0694">RNA-binding</keyword>
<keyword id="KW-0699">rRNA-binding</keyword>
<feature type="chain" id="PRO_0000126378" description="Small ribosomal subunit protein uS8">
    <location>
        <begin position="1"/>
        <end position="132"/>
    </location>
</feature>
<organism>
    <name type="scientific">Brucella melitensis biotype 1 (strain ATCC 23456 / CCUG 17765 / NCTC 10094 / 16M)</name>
    <dbReference type="NCBI Taxonomy" id="224914"/>
    <lineage>
        <taxon>Bacteria</taxon>
        <taxon>Pseudomonadati</taxon>
        <taxon>Pseudomonadota</taxon>
        <taxon>Alphaproteobacteria</taxon>
        <taxon>Hyphomicrobiales</taxon>
        <taxon>Brucellaceae</taxon>
        <taxon>Brucella/Ochrobactrum group</taxon>
        <taxon>Brucella</taxon>
    </lineage>
</organism>
<accession>Q8YHM6</accession>